<dbReference type="EMBL" id="AF227130">
    <property type="protein sequence ID" value="AAF43903.1"/>
    <property type="molecule type" value="Genomic_DNA"/>
</dbReference>
<dbReference type="EMBL" id="AY724961">
    <property type="protein sequence ID" value="AAU21157.1"/>
    <property type="status" value="ALT_INIT"/>
    <property type="molecule type" value="Genomic_DNA"/>
</dbReference>
<dbReference type="EMBL" id="AC004979">
    <property type="protein sequence ID" value="AAS02038.1"/>
    <property type="molecule type" value="Genomic_DNA"/>
</dbReference>
<dbReference type="EMBL" id="BC069337">
    <property type="protein sequence ID" value="AAH69337.1"/>
    <property type="molecule type" value="mRNA"/>
</dbReference>
<dbReference type="EMBL" id="CH236950">
    <property type="protein sequence ID" value="EAL24017.1"/>
    <property type="molecule type" value="Genomic_DNA"/>
</dbReference>
<dbReference type="EMBL" id="CH471070">
    <property type="protein sequence ID" value="EAW83982.1"/>
    <property type="molecule type" value="Genomic_DNA"/>
</dbReference>
<dbReference type="EMBL" id="BC095523">
    <property type="protein sequence ID" value="AAH95523.1"/>
    <property type="molecule type" value="mRNA"/>
</dbReference>
<dbReference type="CCDS" id="CCDS5867.1"/>
<dbReference type="RefSeq" id="NP_058639.1">
    <property type="nucleotide sequence ID" value="NM_016943.2"/>
</dbReference>
<dbReference type="SMR" id="Q9NYW6"/>
<dbReference type="BioGRID" id="119141">
    <property type="interactions" value="1"/>
</dbReference>
<dbReference type="FunCoup" id="Q9NYW6">
    <property type="interactions" value="267"/>
</dbReference>
<dbReference type="STRING" id="9606.ENSP00000247879"/>
<dbReference type="ChEMBL" id="CHEMBL4523474"/>
<dbReference type="DrugCentral" id="Q9NYW6"/>
<dbReference type="GlyCosmos" id="Q9NYW6">
    <property type="glycosylation" value="1 site, No reported glycans"/>
</dbReference>
<dbReference type="GlyGen" id="Q9NYW6">
    <property type="glycosylation" value="1 site"/>
</dbReference>
<dbReference type="iPTMnet" id="Q9NYW6"/>
<dbReference type="PhosphoSitePlus" id="Q9NYW6"/>
<dbReference type="BioMuta" id="TAS2R3"/>
<dbReference type="DMDM" id="114152888"/>
<dbReference type="PaxDb" id="9606-ENSP00000247879"/>
<dbReference type="PeptideAtlas" id="Q9NYW6"/>
<dbReference type="Antibodypedia" id="32506">
    <property type="antibodies" value="103 antibodies from 20 providers"/>
</dbReference>
<dbReference type="DNASU" id="50831"/>
<dbReference type="Ensembl" id="ENST00000247879.2">
    <property type="protein sequence ID" value="ENSP00000247879.2"/>
    <property type="gene ID" value="ENSG00000127362.2"/>
</dbReference>
<dbReference type="GeneID" id="50831"/>
<dbReference type="KEGG" id="hsa:50831"/>
<dbReference type="MANE-Select" id="ENST00000247879.2">
    <property type="protein sequence ID" value="ENSP00000247879.2"/>
    <property type="RefSeq nucleotide sequence ID" value="NM_016943.2"/>
    <property type="RefSeq protein sequence ID" value="NP_058639.1"/>
</dbReference>
<dbReference type="UCSC" id="uc003vwp.1">
    <property type="organism name" value="human"/>
</dbReference>
<dbReference type="AGR" id="HGNC:14910"/>
<dbReference type="CTD" id="50831"/>
<dbReference type="DisGeNET" id="50831"/>
<dbReference type="GeneCards" id="TAS2R3"/>
<dbReference type="HGNC" id="HGNC:14910">
    <property type="gene designation" value="TAS2R3"/>
</dbReference>
<dbReference type="HPA" id="ENSG00000127362">
    <property type="expression patterns" value="Not detected"/>
</dbReference>
<dbReference type="MIM" id="604868">
    <property type="type" value="gene"/>
</dbReference>
<dbReference type="neXtProt" id="NX_Q9NYW6"/>
<dbReference type="OpenTargets" id="ENSG00000127362"/>
<dbReference type="PharmGKB" id="PA37922"/>
<dbReference type="VEuPathDB" id="HostDB:ENSG00000127362"/>
<dbReference type="eggNOG" id="ENOG502SKRK">
    <property type="taxonomic scope" value="Eukaryota"/>
</dbReference>
<dbReference type="GeneTree" id="ENSGT01100000263477"/>
<dbReference type="HOGENOM" id="CLU_072337_3_0_1"/>
<dbReference type="InParanoid" id="Q9NYW6"/>
<dbReference type="OMA" id="IDIFWTF"/>
<dbReference type="OrthoDB" id="8876749at2759"/>
<dbReference type="PAN-GO" id="Q9NYW6">
    <property type="GO annotations" value="3 GO annotations based on evolutionary models"/>
</dbReference>
<dbReference type="PhylomeDB" id="Q9NYW6"/>
<dbReference type="TreeFam" id="TF335891"/>
<dbReference type="PathwayCommons" id="Q9NYW6"/>
<dbReference type="Reactome" id="R-HSA-418594">
    <property type="pathway name" value="G alpha (i) signalling events"/>
</dbReference>
<dbReference type="Reactome" id="R-HSA-420499">
    <property type="pathway name" value="Class C/3 (Metabotropic glutamate/pheromone receptors)"/>
</dbReference>
<dbReference type="Reactome" id="R-HSA-9717207">
    <property type="pathway name" value="Sensory perception of sweet, bitter, and umami (glutamate) taste"/>
</dbReference>
<dbReference type="BioGRID-ORCS" id="50831">
    <property type="hits" value="8 hits in 1144 CRISPR screens"/>
</dbReference>
<dbReference type="GeneWiki" id="TAS2R3"/>
<dbReference type="GenomeRNAi" id="50831"/>
<dbReference type="Pharos" id="Q9NYW6">
    <property type="development level" value="Tchem"/>
</dbReference>
<dbReference type="PRO" id="PR:Q9NYW6"/>
<dbReference type="Proteomes" id="UP000005640">
    <property type="component" value="Chromosome 7"/>
</dbReference>
<dbReference type="RNAct" id="Q9NYW6">
    <property type="molecule type" value="protein"/>
</dbReference>
<dbReference type="Bgee" id="ENSG00000127362">
    <property type="expression patterns" value="Expressed in corpus callosum and 65 other cell types or tissues"/>
</dbReference>
<dbReference type="GO" id="GO:0016020">
    <property type="term" value="C:membrane"/>
    <property type="evidence" value="ECO:0000318"/>
    <property type="project" value="GO_Central"/>
</dbReference>
<dbReference type="GO" id="GO:0005886">
    <property type="term" value="C:plasma membrane"/>
    <property type="evidence" value="ECO:0000304"/>
    <property type="project" value="Reactome"/>
</dbReference>
<dbReference type="GO" id="GO:0033038">
    <property type="term" value="F:bitter taste receptor activity"/>
    <property type="evidence" value="ECO:0000314"/>
    <property type="project" value="UniProtKB"/>
</dbReference>
<dbReference type="GO" id="GO:0004930">
    <property type="term" value="F:G protein-coupled receptor activity"/>
    <property type="evidence" value="ECO:0007669"/>
    <property type="project" value="UniProtKB-KW"/>
</dbReference>
<dbReference type="GO" id="GO:0008527">
    <property type="term" value="F:taste receptor activity"/>
    <property type="evidence" value="ECO:0000304"/>
    <property type="project" value="UniProtKB"/>
</dbReference>
<dbReference type="GO" id="GO:0001580">
    <property type="term" value="P:detection of chemical stimulus involved in sensory perception of bitter taste"/>
    <property type="evidence" value="ECO:0000314"/>
    <property type="project" value="UniProtKB"/>
</dbReference>
<dbReference type="CDD" id="cd15020">
    <property type="entry name" value="7tm_TAS2R3"/>
    <property type="match status" value="1"/>
</dbReference>
<dbReference type="FunFam" id="1.20.1070.10:FF:000042">
    <property type="entry name" value="Taste receptor type 2 member 7"/>
    <property type="match status" value="1"/>
</dbReference>
<dbReference type="Gene3D" id="1.20.1070.10">
    <property type="entry name" value="Rhodopsin 7-helix transmembrane proteins"/>
    <property type="match status" value="1"/>
</dbReference>
<dbReference type="InterPro" id="IPR007960">
    <property type="entry name" value="TAS2R"/>
</dbReference>
<dbReference type="PANTHER" id="PTHR11394">
    <property type="entry name" value="TASTE RECEPTOR TYPE 2"/>
    <property type="match status" value="1"/>
</dbReference>
<dbReference type="PANTHER" id="PTHR11394:SF49">
    <property type="entry name" value="TASTE RECEPTOR TYPE 2 MEMBER 3"/>
    <property type="match status" value="1"/>
</dbReference>
<dbReference type="Pfam" id="PF05296">
    <property type="entry name" value="TAS2R"/>
    <property type="match status" value="1"/>
</dbReference>
<dbReference type="SUPFAM" id="SSF81321">
    <property type="entry name" value="Family A G protein-coupled receptor-like"/>
    <property type="match status" value="1"/>
</dbReference>
<organism>
    <name type="scientific">Homo sapiens</name>
    <name type="common">Human</name>
    <dbReference type="NCBI Taxonomy" id="9606"/>
    <lineage>
        <taxon>Eukaryota</taxon>
        <taxon>Metazoa</taxon>
        <taxon>Chordata</taxon>
        <taxon>Craniata</taxon>
        <taxon>Vertebrata</taxon>
        <taxon>Euteleostomi</taxon>
        <taxon>Mammalia</taxon>
        <taxon>Eutheria</taxon>
        <taxon>Euarchontoglires</taxon>
        <taxon>Primates</taxon>
        <taxon>Haplorrhini</taxon>
        <taxon>Catarrhini</taxon>
        <taxon>Hominidae</taxon>
        <taxon>Homo</taxon>
    </lineage>
</organism>
<accession>Q9NYW6</accession>
<accession>A4D1U2</accession>
<accession>Q645W2</accession>
<accession>Q75MV6</accession>
<feature type="chain" id="PRO_0000082197" description="Taste receptor type 2 member 3">
    <location>
        <begin position="1"/>
        <end position="316"/>
    </location>
</feature>
<feature type="topological domain" description="Extracellular" evidence="1">
    <location>
        <begin position="1"/>
        <end position="6"/>
    </location>
</feature>
<feature type="transmembrane region" description="Helical; Name=1" evidence="1">
    <location>
        <begin position="7"/>
        <end position="27"/>
    </location>
</feature>
<feature type="topological domain" description="Cytoplasmic" evidence="1">
    <location>
        <begin position="28"/>
        <end position="42"/>
    </location>
</feature>
<feature type="transmembrane region" description="Helical; Name=2" evidence="1">
    <location>
        <begin position="43"/>
        <end position="63"/>
    </location>
</feature>
<feature type="topological domain" description="Extracellular" evidence="1">
    <location>
        <begin position="64"/>
        <end position="94"/>
    </location>
</feature>
<feature type="transmembrane region" description="Helical; Name=3" evidence="1">
    <location>
        <begin position="95"/>
        <end position="115"/>
    </location>
</feature>
<feature type="topological domain" description="Cytoplasmic" evidence="1">
    <location>
        <begin position="116"/>
        <end position="128"/>
    </location>
</feature>
<feature type="transmembrane region" description="Helical; Name=4" evidence="1">
    <location>
        <begin position="129"/>
        <end position="149"/>
    </location>
</feature>
<feature type="topological domain" description="Extracellular" evidence="1">
    <location>
        <begin position="150"/>
        <end position="186"/>
    </location>
</feature>
<feature type="transmembrane region" description="Helical; Name=5" evidence="1">
    <location>
        <begin position="187"/>
        <end position="207"/>
    </location>
</feature>
<feature type="topological domain" description="Cytoplasmic" evidence="1">
    <location>
        <begin position="208"/>
        <end position="234"/>
    </location>
</feature>
<feature type="transmembrane region" description="Helical; Name=6" evidence="1">
    <location>
        <begin position="235"/>
        <end position="255"/>
    </location>
</feature>
<feature type="topological domain" description="Extracellular" evidence="1">
    <location>
        <begin position="256"/>
        <end position="266"/>
    </location>
</feature>
<feature type="transmembrane region" description="Helical; Name=7" evidence="1">
    <location>
        <begin position="267"/>
        <end position="287"/>
    </location>
</feature>
<feature type="topological domain" description="Cytoplasmic" evidence="1">
    <location>
        <begin position="288"/>
        <end position="316"/>
    </location>
</feature>
<feature type="glycosylation site" description="N-linked (GlcNAc...) asparagine" evidence="1">
    <location>
        <position position="166"/>
    </location>
</feature>
<protein>
    <recommendedName>
        <fullName>Taste receptor type 2 member 3</fullName>
        <shortName>T2R3</shortName>
    </recommendedName>
</protein>
<evidence type="ECO:0000255" key="1"/>
<evidence type="ECO:0000269" key="2">
    <source>
    </source>
</evidence>
<evidence type="ECO:0000269" key="3">
    <source>
    </source>
</evidence>
<evidence type="ECO:0000305" key="4"/>
<name>TA2R3_HUMAN</name>
<keyword id="KW-0297">G-protein coupled receptor</keyword>
<keyword id="KW-0325">Glycoprotein</keyword>
<keyword id="KW-0472">Membrane</keyword>
<keyword id="KW-0675">Receptor</keyword>
<keyword id="KW-1185">Reference proteome</keyword>
<keyword id="KW-0716">Sensory transduction</keyword>
<keyword id="KW-0919">Taste</keyword>
<keyword id="KW-0807">Transducer</keyword>
<keyword id="KW-0812">Transmembrane</keyword>
<keyword id="KW-1133">Transmembrane helix</keyword>
<sequence>MMGLTEGVFLILSGTQFTLGILVNCFIELVNGSSWFKTKRMSLSDFIITTLALLRIILLCIILTDSFLIEFSPNTHDSGIIMQIIDVSWTFTNHLSIWLATCLGVLYCLKIASFSHPTFLWLKWRVSRVMVWMLLGALLLSCGSTASLINEFKLYSVFRGIEATRNVTEHFRKKRSEYYLIHVLGTLWYLPPLIVSLASYSLLIFSLGRHTRQMLQNGTSSRDPTTEAHKRAIRIILSFFFLFLLYFLAFLIASFGNFLPKTKMAKMIGEVMTMFYPAGHSFILILGNSKLKQTFVVMLRCESGHLKPGSKGPIFS</sequence>
<proteinExistence type="evidence at transcript level"/>
<comment type="function">
    <text evidence="2 3">Gustducin-coupled receptor implicated in the perception of bitter compounds in the oral cavity and the gastrointestinal tract. Signals through PLCB2 and the calcium-regulated cation channel TRPM5.</text>
</comment>
<comment type="subcellular location">
    <subcellularLocation>
        <location>Membrane</location>
        <topology>Multi-pass membrane protein</topology>
    </subcellularLocation>
</comment>
<comment type="tissue specificity">
    <text evidence="2">Expressed in subsets of taste receptor cells of the tongue and palate epithelium and exclusively in gustducin-positive cells. Expressed in the antrum and fundus (part of the stomach), duodenum and in gastric endocrine cells.</text>
</comment>
<comment type="miscellaneous">
    <text>Several bitter taste receptors are expressed in a single taste receptor cell.</text>
</comment>
<comment type="similarity">
    <text evidence="4">Belongs to the G-protein coupled receptor T2R family.</text>
</comment>
<comment type="sequence caution" evidence="4">
    <conflict type="erroneous initiation">
        <sequence resource="EMBL-CDS" id="AAU21157"/>
    </conflict>
</comment>
<reference key="1">
    <citation type="journal article" date="2000" name="Cell">
        <title>A novel family of mammalian taste receptors.</title>
        <authorList>
            <person name="Adler E."/>
            <person name="Hoon M.A."/>
            <person name="Mueller K.L."/>
            <person name="Chandrashekar J."/>
            <person name="Ryba N.J.P."/>
            <person name="Zuker C.S."/>
        </authorList>
    </citation>
    <scope>NUCLEOTIDE SEQUENCE [GENOMIC DNA]</scope>
    <scope>FUNCTION</scope>
    <scope>TISSUE SPECIFICITY</scope>
</reference>
<reference key="2">
    <citation type="journal article" date="2005" name="Mol. Biol. Evol.">
        <title>Evolution of bitter taste receptors in humans and apes.</title>
        <authorList>
            <person name="Fischer A."/>
            <person name="Gilad Y."/>
            <person name="Man O."/>
            <person name="Paeaebo S."/>
        </authorList>
    </citation>
    <scope>NUCLEOTIDE SEQUENCE [GENOMIC DNA]</scope>
</reference>
<reference key="3">
    <citation type="journal article" date="2003" name="Nature">
        <title>The DNA sequence of human chromosome 7.</title>
        <authorList>
            <person name="Hillier L.W."/>
            <person name="Fulton R.S."/>
            <person name="Fulton L.A."/>
            <person name="Graves T.A."/>
            <person name="Pepin K.H."/>
            <person name="Wagner-McPherson C."/>
            <person name="Layman D."/>
            <person name="Maas J."/>
            <person name="Jaeger S."/>
            <person name="Walker R."/>
            <person name="Wylie K."/>
            <person name="Sekhon M."/>
            <person name="Becker M.C."/>
            <person name="O'Laughlin M.D."/>
            <person name="Schaller M.E."/>
            <person name="Fewell G.A."/>
            <person name="Delehaunty K.D."/>
            <person name="Miner T.L."/>
            <person name="Nash W.E."/>
            <person name="Cordes M."/>
            <person name="Du H."/>
            <person name="Sun H."/>
            <person name="Edwards J."/>
            <person name="Bradshaw-Cordum H."/>
            <person name="Ali J."/>
            <person name="Andrews S."/>
            <person name="Isak A."/>
            <person name="Vanbrunt A."/>
            <person name="Nguyen C."/>
            <person name="Du F."/>
            <person name="Lamar B."/>
            <person name="Courtney L."/>
            <person name="Kalicki J."/>
            <person name="Ozersky P."/>
            <person name="Bielicki L."/>
            <person name="Scott K."/>
            <person name="Holmes A."/>
            <person name="Harkins R."/>
            <person name="Harris A."/>
            <person name="Strong C.M."/>
            <person name="Hou S."/>
            <person name="Tomlinson C."/>
            <person name="Dauphin-Kohlberg S."/>
            <person name="Kozlowicz-Reilly A."/>
            <person name="Leonard S."/>
            <person name="Rohlfing T."/>
            <person name="Rock S.M."/>
            <person name="Tin-Wollam A.-M."/>
            <person name="Abbott A."/>
            <person name="Minx P."/>
            <person name="Maupin R."/>
            <person name="Strowmatt C."/>
            <person name="Latreille P."/>
            <person name="Miller N."/>
            <person name="Johnson D."/>
            <person name="Murray J."/>
            <person name="Woessner J.P."/>
            <person name="Wendl M.C."/>
            <person name="Yang S.-P."/>
            <person name="Schultz B.R."/>
            <person name="Wallis J.W."/>
            <person name="Spieth J."/>
            <person name="Bieri T.A."/>
            <person name="Nelson J.O."/>
            <person name="Berkowicz N."/>
            <person name="Wohldmann P.E."/>
            <person name="Cook L.L."/>
            <person name="Hickenbotham M.T."/>
            <person name="Eldred J."/>
            <person name="Williams D."/>
            <person name="Bedell J.A."/>
            <person name="Mardis E.R."/>
            <person name="Clifton S.W."/>
            <person name="Chissoe S.L."/>
            <person name="Marra M.A."/>
            <person name="Raymond C."/>
            <person name="Haugen E."/>
            <person name="Gillett W."/>
            <person name="Zhou Y."/>
            <person name="James R."/>
            <person name="Phelps K."/>
            <person name="Iadanoto S."/>
            <person name="Bubb K."/>
            <person name="Simms E."/>
            <person name="Levy R."/>
            <person name="Clendenning J."/>
            <person name="Kaul R."/>
            <person name="Kent W.J."/>
            <person name="Furey T.S."/>
            <person name="Baertsch R.A."/>
            <person name="Brent M.R."/>
            <person name="Keibler E."/>
            <person name="Flicek P."/>
            <person name="Bork P."/>
            <person name="Suyama M."/>
            <person name="Bailey J.A."/>
            <person name="Portnoy M.E."/>
            <person name="Torrents D."/>
            <person name="Chinwalla A.T."/>
            <person name="Gish W.R."/>
            <person name="Eddy S.R."/>
            <person name="McPherson J.D."/>
            <person name="Olson M.V."/>
            <person name="Eichler E.E."/>
            <person name="Green E.D."/>
            <person name="Waterston R.H."/>
            <person name="Wilson R.K."/>
        </authorList>
    </citation>
    <scope>NUCLEOTIDE SEQUENCE [LARGE SCALE GENOMIC DNA]</scope>
</reference>
<reference key="4">
    <citation type="journal article" date="2003" name="Science">
        <title>Human chromosome 7: DNA sequence and biology.</title>
        <authorList>
            <person name="Scherer S.W."/>
            <person name="Cheung J."/>
            <person name="MacDonald J.R."/>
            <person name="Osborne L.R."/>
            <person name="Nakabayashi K."/>
            <person name="Herbrick J.-A."/>
            <person name="Carson A.R."/>
            <person name="Parker-Katiraee L."/>
            <person name="Skaug J."/>
            <person name="Khaja R."/>
            <person name="Zhang J."/>
            <person name="Hudek A.K."/>
            <person name="Li M."/>
            <person name="Haddad M."/>
            <person name="Duggan G.E."/>
            <person name="Fernandez B.A."/>
            <person name="Kanematsu E."/>
            <person name="Gentles S."/>
            <person name="Christopoulos C.C."/>
            <person name="Choufani S."/>
            <person name="Kwasnicka D."/>
            <person name="Zheng X.H."/>
            <person name="Lai Z."/>
            <person name="Nusskern D.R."/>
            <person name="Zhang Q."/>
            <person name="Gu Z."/>
            <person name="Lu F."/>
            <person name="Zeesman S."/>
            <person name="Nowaczyk M.J."/>
            <person name="Teshima I."/>
            <person name="Chitayat D."/>
            <person name="Shuman C."/>
            <person name="Weksberg R."/>
            <person name="Zackai E.H."/>
            <person name="Grebe T.A."/>
            <person name="Cox S.R."/>
            <person name="Kirkpatrick S.J."/>
            <person name="Rahman N."/>
            <person name="Friedman J.M."/>
            <person name="Heng H.H.Q."/>
            <person name="Pelicci P.G."/>
            <person name="Lo-Coco F."/>
            <person name="Belloni E."/>
            <person name="Shaffer L.G."/>
            <person name="Pober B."/>
            <person name="Morton C.C."/>
            <person name="Gusella J.F."/>
            <person name="Bruns G.A.P."/>
            <person name="Korf B.R."/>
            <person name="Quade B.J."/>
            <person name="Ligon A.H."/>
            <person name="Ferguson H."/>
            <person name="Higgins A.W."/>
            <person name="Leach N.T."/>
            <person name="Herrick S.R."/>
            <person name="Lemyre E."/>
            <person name="Farra C.G."/>
            <person name="Kim H.-G."/>
            <person name="Summers A.M."/>
            <person name="Gripp K.W."/>
            <person name="Roberts W."/>
            <person name="Szatmari P."/>
            <person name="Winsor E.J.T."/>
            <person name="Grzeschik K.-H."/>
            <person name="Teebi A."/>
            <person name="Minassian B.A."/>
            <person name="Kere J."/>
            <person name="Armengol L."/>
            <person name="Pujana M.A."/>
            <person name="Estivill X."/>
            <person name="Wilson M.D."/>
            <person name="Koop B.F."/>
            <person name="Tosi S."/>
            <person name="Moore G.E."/>
            <person name="Boright A.P."/>
            <person name="Zlotorynski E."/>
            <person name="Kerem B."/>
            <person name="Kroisel P.M."/>
            <person name="Petek E."/>
            <person name="Oscier D.G."/>
            <person name="Mould S.J."/>
            <person name="Doehner H."/>
            <person name="Doehner K."/>
            <person name="Rommens J.M."/>
            <person name="Vincent J.B."/>
            <person name="Venter J.C."/>
            <person name="Li P.W."/>
            <person name="Mural R.J."/>
            <person name="Adams M.D."/>
            <person name="Tsui L.-C."/>
        </authorList>
    </citation>
    <scope>NUCLEOTIDE SEQUENCE [LARGE SCALE GENOMIC DNA]</scope>
</reference>
<reference key="5">
    <citation type="submission" date="2005-09" db="EMBL/GenBank/DDBJ databases">
        <authorList>
            <person name="Mural R.J."/>
            <person name="Istrail S."/>
            <person name="Sutton G.G."/>
            <person name="Florea L."/>
            <person name="Halpern A.L."/>
            <person name="Mobarry C.M."/>
            <person name="Lippert R."/>
            <person name="Walenz B."/>
            <person name="Shatkay H."/>
            <person name="Dew I."/>
            <person name="Miller J.R."/>
            <person name="Flanigan M.J."/>
            <person name="Edwards N.J."/>
            <person name="Bolanos R."/>
            <person name="Fasulo D."/>
            <person name="Halldorsson B.V."/>
            <person name="Hannenhalli S."/>
            <person name="Turner R."/>
            <person name="Yooseph S."/>
            <person name="Lu F."/>
            <person name="Nusskern D.R."/>
            <person name="Shue B.C."/>
            <person name="Zheng X.H."/>
            <person name="Zhong F."/>
            <person name="Delcher A.L."/>
            <person name="Huson D.H."/>
            <person name="Kravitz S.A."/>
            <person name="Mouchard L."/>
            <person name="Reinert K."/>
            <person name="Remington K.A."/>
            <person name="Clark A.G."/>
            <person name="Waterman M.S."/>
            <person name="Eichler E.E."/>
            <person name="Adams M.D."/>
            <person name="Hunkapiller M.W."/>
            <person name="Myers E.W."/>
            <person name="Venter J.C."/>
        </authorList>
    </citation>
    <scope>NUCLEOTIDE SEQUENCE [LARGE SCALE GENOMIC DNA]</scope>
</reference>
<reference key="6">
    <citation type="journal article" date="2004" name="Genome Res.">
        <title>The status, quality, and expansion of the NIH full-length cDNA project: the Mammalian Gene Collection (MGC).</title>
        <authorList>
            <consortium name="The MGC Project Team"/>
        </authorList>
    </citation>
    <scope>NUCLEOTIDE SEQUENCE [LARGE SCALE MRNA]</scope>
</reference>
<reference key="7">
    <citation type="journal article" date="2000" name="Cell">
        <title>T2Rs function as bitter taste receptors.</title>
        <authorList>
            <person name="Chandrashekar J."/>
            <person name="Mueller K.L."/>
            <person name="Hoon M.A."/>
            <person name="Adler E."/>
            <person name="Feng L."/>
            <person name="Guo W."/>
            <person name="Zuker C.S."/>
            <person name="Ryba N.J.P."/>
        </authorList>
    </citation>
    <scope>FUNCTION</scope>
</reference>
<reference key="8">
    <citation type="journal article" date="2002" name="Curr. Opin. Neurobiol.">
        <title>Receptors for bitter and sweet taste.</title>
        <authorList>
            <person name="Montmayeur J.-P."/>
            <person name="Matsunami H."/>
        </authorList>
    </citation>
    <scope>REVIEW</scope>
</reference>
<reference key="9">
    <citation type="journal article" date="2002" name="J. Biol. Chem.">
        <title>Molecular mechanisms of bitter and sweet taste transduction.</title>
        <authorList>
            <person name="Margolskee R.F."/>
        </authorList>
    </citation>
    <scope>REVIEW</scope>
</reference>
<reference key="10">
    <citation type="journal article" date="2003" name="Cell">
        <title>Coding of sweet, bitter, and umami tastes: different receptor cells sharing similar signaling pathways.</title>
        <authorList>
            <person name="Zhang Y."/>
            <person name="Hoon M.A."/>
            <person name="Chandrashekar J."/>
            <person name="Mueller K.L."/>
            <person name="Cook B."/>
            <person name="Wu D."/>
            <person name="Zuker C.S."/>
            <person name="Ryba N.J."/>
        </authorList>
    </citation>
    <scope>REVIEW</scope>
</reference>
<gene>
    <name type="primary">TAS2R3</name>
</gene>